<sequence length="67" mass="7188">MDARLLEILVCPICKGPLHYDRAAQELICNADKLAYPIRDGIPVMLVDEARQTVEGTPVDPAGPAGS</sequence>
<gene>
    <name type="ordered locus">Bamb_2594</name>
</gene>
<name>Y2594_BURCM</name>
<comment type="similarity">
    <text evidence="1">Belongs to the UPF0434 family.</text>
</comment>
<proteinExistence type="inferred from homology"/>
<protein>
    <recommendedName>
        <fullName evidence="1">UPF0434 protein Bamb_2594</fullName>
    </recommendedName>
</protein>
<accession>Q0BCH3</accession>
<dbReference type="EMBL" id="CP000440">
    <property type="protein sequence ID" value="ABI88150.1"/>
    <property type="molecule type" value="Genomic_DNA"/>
</dbReference>
<dbReference type="RefSeq" id="WP_006750935.1">
    <property type="nucleotide sequence ID" value="NZ_CP009798.1"/>
</dbReference>
<dbReference type="SMR" id="Q0BCH3"/>
<dbReference type="KEGG" id="bam:Bamb_2594"/>
<dbReference type="PATRIC" id="fig|339670.21.peg.2308"/>
<dbReference type="eggNOG" id="COG2835">
    <property type="taxonomic scope" value="Bacteria"/>
</dbReference>
<dbReference type="Proteomes" id="UP000000662">
    <property type="component" value="Chromosome 1"/>
</dbReference>
<dbReference type="GO" id="GO:0005829">
    <property type="term" value="C:cytosol"/>
    <property type="evidence" value="ECO:0007669"/>
    <property type="project" value="TreeGrafter"/>
</dbReference>
<dbReference type="FunFam" id="2.20.25.10:FF:000002">
    <property type="entry name" value="UPF0434 protein YcaR"/>
    <property type="match status" value="1"/>
</dbReference>
<dbReference type="Gene3D" id="2.20.25.10">
    <property type="match status" value="1"/>
</dbReference>
<dbReference type="HAMAP" id="MF_01187">
    <property type="entry name" value="UPF0434"/>
    <property type="match status" value="1"/>
</dbReference>
<dbReference type="InterPro" id="IPR005651">
    <property type="entry name" value="Trm112-like"/>
</dbReference>
<dbReference type="PANTHER" id="PTHR33505:SF4">
    <property type="entry name" value="PROTEIN PREY, MITOCHONDRIAL"/>
    <property type="match status" value="1"/>
</dbReference>
<dbReference type="PANTHER" id="PTHR33505">
    <property type="entry name" value="ZGC:162634"/>
    <property type="match status" value="1"/>
</dbReference>
<dbReference type="Pfam" id="PF03966">
    <property type="entry name" value="Trm112p"/>
    <property type="match status" value="1"/>
</dbReference>
<dbReference type="SUPFAM" id="SSF158997">
    <property type="entry name" value="Trm112p-like"/>
    <property type="match status" value="1"/>
</dbReference>
<reference key="1">
    <citation type="submission" date="2006-08" db="EMBL/GenBank/DDBJ databases">
        <title>Complete sequence of chromosome 1 of Burkholderia cepacia AMMD.</title>
        <authorList>
            <person name="Copeland A."/>
            <person name="Lucas S."/>
            <person name="Lapidus A."/>
            <person name="Barry K."/>
            <person name="Detter J.C."/>
            <person name="Glavina del Rio T."/>
            <person name="Hammon N."/>
            <person name="Israni S."/>
            <person name="Pitluck S."/>
            <person name="Bruce D."/>
            <person name="Chain P."/>
            <person name="Malfatti S."/>
            <person name="Shin M."/>
            <person name="Vergez L."/>
            <person name="Schmutz J."/>
            <person name="Larimer F."/>
            <person name="Land M."/>
            <person name="Hauser L."/>
            <person name="Kyrpides N."/>
            <person name="Kim E."/>
            <person name="Parke J."/>
            <person name="Coenye T."/>
            <person name="Konstantinidis K."/>
            <person name="Ramette A."/>
            <person name="Tiedje J."/>
            <person name="Richardson P."/>
        </authorList>
    </citation>
    <scope>NUCLEOTIDE SEQUENCE [LARGE SCALE GENOMIC DNA]</scope>
    <source>
        <strain>ATCC BAA-244 / DSM 16087 / CCUG 44356 / LMG 19182 / AMMD</strain>
    </source>
</reference>
<feature type="chain" id="PRO_0000291073" description="UPF0434 protein Bamb_2594">
    <location>
        <begin position="1"/>
        <end position="67"/>
    </location>
</feature>
<organism>
    <name type="scientific">Burkholderia ambifaria (strain ATCC BAA-244 / DSM 16087 / CCUG 44356 / LMG 19182 / AMMD)</name>
    <name type="common">Burkholderia cepacia (strain AMMD)</name>
    <dbReference type="NCBI Taxonomy" id="339670"/>
    <lineage>
        <taxon>Bacteria</taxon>
        <taxon>Pseudomonadati</taxon>
        <taxon>Pseudomonadota</taxon>
        <taxon>Betaproteobacteria</taxon>
        <taxon>Burkholderiales</taxon>
        <taxon>Burkholderiaceae</taxon>
        <taxon>Burkholderia</taxon>
        <taxon>Burkholderia cepacia complex</taxon>
    </lineage>
</organism>
<evidence type="ECO:0000255" key="1">
    <source>
        <dbReference type="HAMAP-Rule" id="MF_01187"/>
    </source>
</evidence>